<organism>
    <name type="scientific">Drosophila melanogaster</name>
    <name type="common">Fruit fly</name>
    <dbReference type="NCBI Taxonomy" id="7227"/>
    <lineage>
        <taxon>Eukaryota</taxon>
        <taxon>Metazoa</taxon>
        <taxon>Ecdysozoa</taxon>
        <taxon>Arthropoda</taxon>
        <taxon>Hexapoda</taxon>
        <taxon>Insecta</taxon>
        <taxon>Pterygota</taxon>
        <taxon>Neoptera</taxon>
        <taxon>Endopterygota</taxon>
        <taxon>Diptera</taxon>
        <taxon>Brachycera</taxon>
        <taxon>Muscomorpha</taxon>
        <taxon>Ephydroidea</taxon>
        <taxon>Drosophilidae</taxon>
        <taxon>Drosophila</taxon>
        <taxon>Sophophora</taxon>
    </lineage>
</organism>
<proteinExistence type="evidence at protein level"/>
<accession>P23645</accession>
<accession>Q9VL53</accession>
<dbReference type="EMBL" id="X53275">
    <property type="protein sequence ID" value="CAB37863.1"/>
    <property type="molecule type" value="mRNA"/>
</dbReference>
<dbReference type="EMBL" id="AE014134">
    <property type="protein sequence ID" value="AAF52844.1"/>
    <property type="molecule type" value="Genomic_DNA"/>
</dbReference>
<dbReference type="EMBL" id="AY051981">
    <property type="protein sequence ID" value="AAK93405.1"/>
    <property type="molecule type" value="mRNA"/>
</dbReference>
<dbReference type="PIR" id="S09699">
    <property type="entry name" value="S09699"/>
</dbReference>
<dbReference type="RefSeq" id="NP_476837.1">
    <property type="nucleotide sequence ID" value="NM_057489.5"/>
</dbReference>
<dbReference type="SMR" id="P23645"/>
<dbReference type="BioGRID" id="60424">
    <property type="interactions" value="8"/>
</dbReference>
<dbReference type="DIP" id="DIP-21188N"/>
<dbReference type="FunCoup" id="P23645">
    <property type="interactions" value="14"/>
</dbReference>
<dbReference type="IntAct" id="P23645">
    <property type="interactions" value="1"/>
</dbReference>
<dbReference type="STRING" id="7227.FBpp0303019"/>
<dbReference type="TCDB" id="1.A.8.8.3">
    <property type="family name" value="the major intrinsic protein (mip) family"/>
</dbReference>
<dbReference type="GlyGen" id="P23645">
    <property type="glycosylation" value="1 site"/>
</dbReference>
<dbReference type="iPTMnet" id="P23645"/>
<dbReference type="PaxDb" id="7227-FBpp0079519"/>
<dbReference type="EnsemblMetazoa" id="FBtr0079929">
    <property type="protein sequence ID" value="FBpp0079519"/>
    <property type="gene ID" value="FBgn0000180"/>
</dbReference>
<dbReference type="GeneID" id="34330"/>
<dbReference type="KEGG" id="dme:Dmel_CG4722"/>
<dbReference type="AGR" id="FB:FBgn0000180"/>
<dbReference type="CTD" id="34330"/>
<dbReference type="FlyBase" id="FBgn0000180">
    <property type="gene designation" value="bib"/>
</dbReference>
<dbReference type="VEuPathDB" id="VectorBase:FBgn0000180"/>
<dbReference type="eggNOG" id="KOG0223">
    <property type="taxonomic scope" value="Eukaryota"/>
</dbReference>
<dbReference type="HOGENOM" id="CLU_021773_0_0_1"/>
<dbReference type="InParanoid" id="P23645"/>
<dbReference type="OMA" id="CQSIYTA"/>
<dbReference type="OrthoDB" id="3222at2759"/>
<dbReference type="PhylomeDB" id="P23645"/>
<dbReference type="Reactome" id="R-DME-1237044">
    <property type="pathway name" value="Erythrocytes take up carbon dioxide and release oxygen"/>
</dbReference>
<dbReference type="Reactome" id="R-DME-1247673">
    <property type="pathway name" value="Erythrocytes take up oxygen and release carbon dioxide"/>
</dbReference>
<dbReference type="Reactome" id="R-DME-432040">
    <property type="pathway name" value="Vasopressin regulates renal water homeostasis via Aquaporins"/>
</dbReference>
<dbReference type="Reactome" id="R-DME-432047">
    <property type="pathway name" value="Passive transport by Aquaporins"/>
</dbReference>
<dbReference type="SignaLink" id="P23645"/>
<dbReference type="BioGRID-ORCS" id="34330">
    <property type="hits" value="0 hits in 3 CRISPR screens"/>
</dbReference>
<dbReference type="GenomeRNAi" id="34330"/>
<dbReference type="PRO" id="PR:P23645"/>
<dbReference type="Proteomes" id="UP000000803">
    <property type="component" value="Chromosome 2L"/>
</dbReference>
<dbReference type="Bgee" id="FBgn0000180">
    <property type="expression patterns" value="Expressed in interfollicle cell in ovary and 31 other cell types or tissues"/>
</dbReference>
<dbReference type="ExpressionAtlas" id="P23645">
    <property type="expression patterns" value="baseline and differential"/>
</dbReference>
<dbReference type="GO" id="GO:0016020">
    <property type="term" value="C:membrane"/>
    <property type="evidence" value="ECO:0000314"/>
    <property type="project" value="FlyBase"/>
</dbReference>
<dbReference type="GO" id="GO:0005886">
    <property type="term" value="C:plasma membrane"/>
    <property type="evidence" value="ECO:0000318"/>
    <property type="project" value="GO_Central"/>
</dbReference>
<dbReference type="GO" id="GO:0015267">
    <property type="term" value="F:channel activity"/>
    <property type="evidence" value="ECO:0000250"/>
    <property type="project" value="FlyBase"/>
</dbReference>
<dbReference type="GO" id="GO:0005261">
    <property type="term" value="F:monoatomic cation channel activity"/>
    <property type="evidence" value="ECO:0000314"/>
    <property type="project" value="FlyBase"/>
</dbReference>
<dbReference type="GO" id="GO:0015250">
    <property type="term" value="F:water channel activity"/>
    <property type="evidence" value="ECO:0000318"/>
    <property type="project" value="GO_Central"/>
</dbReference>
<dbReference type="GO" id="GO:0030154">
    <property type="term" value="P:cell differentiation"/>
    <property type="evidence" value="ECO:0007669"/>
    <property type="project" value="UniProtKB-KW"/>
</dbReference>
<dbReference type="GO" id="GO:0098609">
    <property type="term" value="P:cell-cell adhesion"/>
    <property type="evidence" value="ECO:0000314"/>
    <property type="project" value="FlyBase"/>
</dbReference>
<dbReference type="GO" id="GO:0007498">
    <property type="term" value="P:mesoderm development"/>
    <property type="evidence" value="ECO:0000315"/>
    <property type="project" value="FlyBase"/>
</dbReference>
<dbReference type="GO" id="GO:0007399">
    <property type="term" value="P:nervous system development"/>
    <property type="evidence" value="ECO:0007669"/>
    <property type="project" value="UniProtKB-KW"/>
</dbReference>
<dbReference type="GO" id="GO:0055085">
    <property type="term" value="P:transmembrane transport"/>
    <property type="evidence" value="ECO:0000250"/>
    <property type="project" value="FlyBase"/>
</dbReference>
<dbReference type="GO" id="GO:0006833">
    <property type="term" value="P:water transport"/>
    <property type="evidence" value="ECO:0000318"/>
    <property type="project" value="GO_Central"/>
</dbReference>
<dbReference type="CDD" id="cd00333">
    <property type="entry name" value="MIP"/>
    <property type="match status" value="1"/>
</dbReference>
<dbReference type="FunFam" id="1.20.1080.10:FF:000026">
    <property type="entry name" value="Big brain"/>
    <property type="match status" value="1"/>
</dbReference>
<dbReference type="Gene3D" id="1.20.1080.10">
    <property type="entry name" value="Glycerol uptake facilitator protein"/>
    <property type="match status" value="1"/>
</dbReference>
<dbReference type="InterPro" id="IPR023271">
    <property type="entry name" value="Aquaporin-like"/>
</dbReference>
<dbReference type="InterPro" id="IPR034294">
    <property type="entry name" value="Aquaporin_transptr"/>
</dbReference>
<dbReference type="InterPro" id="IPR000425">
    <property type="entry name" value="MIP"/>
</dbReference>
<dbReference type="InterPro" id="IPR022357">
    <property type="entry name" value="MIP_CS"/>
</dbReference>
<dbReference type="NCBIfam" id="TIGR00861">
    <property type="entry name" value="MIP"/>
    <property type="match status" value="1"/>
</dbReference>
<dbReference type="PANTHER" id="PTHR19139">
    <property type="entry name" value="AQUAPORIN TRANSPORTER"/>
    <property type="match status" value="1"/>
</dbReference>
<dbReference type="PANTHER" id="PTHR19139:SF268">
    <property type="entry name" value="NEUROGENIC PROTEIN BIG BRAIN"/>
    <property type="match status" value="1"/>
</dbReference>
<dbReference type="Pfam" id="PF00230">
    <property type="entry name" value="MIP"/>
    <property type="match status" value="1"/>
</dbReference>
<dbReference type="PRINTS" id="PR00783">
    <property type="entry name" value="MINTRINSICP"/>
</dbReference>
<dbReference type="SUPFAM" id="SSF81338">
    <property type="entry name" value="Aquaporin-like"/>
    <property type="match status" value="1"/>
</dbReference>
<dbReference type="PROSITE" id="PS00221">
    <property type="entry name" value="MIP"/>
    <property type="match status" value="1"/>
</dbReference>
<name>BIB_DROME</name>
<evidence type="ECO:0000255" key="1"/>
<evidence type="ECO:0000256" key="2">
    <source>
        <dbReference type="SAM" id="MobiDB-lite"/>
    </source>
</evidence>
<evidence type="ECO:0000269" key="3">
    <source>
    </source>
</evidence>
<evidence type="ECO:0000269" key="4">
    <source>
    </source>
</evidence>
<evidence type="ECO:0000269" key="5">
    <source>
    </source>
</evidence>
<evidence type="ECO:0000269" key="6">
    <source>
    </source>
</evidence>
<evidence type="ECO:0000269" key="7">
    <source>
    </source>
</evidence>
<evidence type="ECO:0000269" key="8">
    <source>
    </source>
</evidence>
<evidence type="ECO:0000305" key="9"/>
<comment type="function">
    <text evidence="3 4 5 6 8">Essential for proper differentiation of ectoderm. Acts synergistically with neurogenic locus proteins Notch and Delta during the separation of neural and epidermal cell lineages in response to the lateral inhibition signal. Voltage-insensitive monovalent cation channel. Ion transport is blocked by the presence of divalent cations.</text>
</comment>
<comment type="subcellular location">
    <subcellularLocation>
        <location evidence="8">Membrane</location>
        <topology evidence="8">Multi-pass membrane protein</topology>
    </subcellularLocation>
</comment>
<comment type="tissue specificity">
    <text evidence="8">Detected in all tissues with neurogenic abilities, for example the neurogenic ectoderm.</text>
</comment>
<comment type="domain">
    <text>Aquaporins contain two tandem repeats each containing three membrane-spanning domains and a pore-forming loop with the signature motif Asn-Pro-Ala (NPA).</text>
</comment>
<comment type="PTM">
    <text evidence="3 7">Phosphorylated at its C-terminus.</text>
</comment>
<comment type="miscellaneous">
    <text>Separation of neuroblasts from the ectoderm into the inner part of embryo is one of the first steps of CNS development in insects, this process is under control of the neurogenic genes. Mutation in bib gene underlies 'big brain' development defect.</text>
</comment>
<comment type="similarity">
    <text evidence="9">Belongs to the MIP/aquaporin (TC 1.A.8) family.</text>
</comment>
<reference key="1">
    <citation type="journal article" date="1990" name="Nature">
        <title>Similarity of the product of the Drosophila neurogenic gene big brain to transmembrane channel proteins.</title>
        <authorList>
            <person name="Rao Y."/>
            <person name="Jan L.Y."/>
            <person name="Jan Y.N."/>
        </authorList>
    </citation>
    <scope>NUCLEOTIDE SEQUENCE [MRNA]</scope>
    <scope>FUNCTION</scope>
</reference>
<reference key="2">
    <citation type="journal article" date="2000" name="Science">
        <title>The genome sequence of Drosophila melanogaster.</title>
        <authorList>
            <person name="Adams M.D."/>
            <person name="Celniker S.E."/>
            <person name="Holt R.A."/>
            <person name="Evans C.A."/>
            <person name="Gocayne J.D."/>
            <person name="Amanatides P.G."/>
            <person name="Scherer S.E."/>
            <person name="Li P.W."/>
            <person name="Hoskins R.A."/>
            <person name="Galle R.F."/>
            <person name="George R.A."/>
            <person name="Lewis S.E."/>
            <person name="Richards S."/>
            <person name="Ashburner M."/>
            <person name="Henderson S.N."/>
            <person name="Sutton G.G."/>
            <person name="Wortman J.R."/>
            <person name="Yandell M.D."/>
            <person name="Zhang Q."/>
            <person name="Chen L.X."/>
            <person name="Brandon R.C."/>
            <person name="Rogers Y.-H.C."/>
            <person name="Blazej R.G."/>
            <person name="Champe M."/>
            <person name="Pfeiffer B.D."/>
            <person name="Wan K.H."/>
            <person name="Doyle C."/>
            <person name="Baxter E.G."/>
            <person name="Helt G."/>
            <person name="Nelson C.R."/>
            <person name="Miklos G.L.G."/>
            <person name="Abril J.F."/>
            <person name="Agbayani A."/>
            <person name="An H.-J."/>
            <person name="Andrews-Pfannkoch C."/>
            <person name="Baldwin D."/>
            <person name="Ballew R.M."/>
            <person name="Basu A."/>
            <person name="Baxendale J."/>
            <person name="Bayraktaroglu L."/>
            <person name="Beasley E.M."/>
            <person name="Beeson K.Y."/>
            <person name="Benos P.V."/>
            <person name="Berman B.P."/>
            <person name="Bhandari D."/>
            <person name="Bolshakov S."/>
            <person name="Borkova D."/>
            <person name="Botchan M.R."/>
            <person name="Bouck J."/>
            <person name="Brokstein P."/>
            <person name="Brottier P."/>
            <person name="Burtis K.C."/>
            <person name="Busam D.A."/>
            <person name="Butler H."/>
            <person name="Cadieu E."/>
            <person name="Center A."/>
            <person name="Chandra I."/>
            <person name="Cherry J.M."/>
            <person name="Cawley S."/>
            <person name="Dahlke C."/>
            <person name="Davenport L.B."/>
            <person name="Davies P."/>
            <person name="de Pablos B."/>
            <person name="Delcher A."/>
            <person name="Deng Z."/>
            <person name="Mays A.D."/>
            <person name="Dew I."/>
            <person name="Dietz S.M."/>
            <person name="Dodson K."/>
            <person name="Doup L.E."/>
            <person name="Downes M."/>
            <person name="Dugan-Rocha S."/>
            <person name="Dunkov B.C."/>
            <person name="Dunn P."/>
            <person name="Durbin K.J."/>
            <person name="Evangelista C.C."/>
            <person name="Ferraz C."/>
            <person name="Ferriera S."/>
            <person name="Fleischmann W."/>
            <person name="Fosler C."/>
            <person name="Gabrielian A.E."/>
            <person name="Garg N.S."/>
            <person name="Gelbart W.M."/>
            <person name="Glasser K."/>
            <person name="Glodek A."/>
            <person name="Gong F."/>
            <person name="Gorrell J.H."/>
            <person name="Gu Z."/>
            <person name="Guan P."/>
            <person name="Harris M."/>
            <person name="Harris N.L."/>
            <person name="Harvey D.A."/>
            <person name="Heiman T.J."/>
            <person name="Hernandez J.R."/>
            <person name="Houck J."/>
            <person name="Hostin D."/>
            <person name="Houston K.A."/>
            <person name="Howland T.J."/>
            <person name="Wei M.-H."/>
            <person name="Ibegwam C."/>
            <person name="Jalali M."/>
            <person name="Kalush F."/>
            <person name="Karpen G.H."/>
            <person name="Ke Z."/>
            <person name="Kennison J.A."/>
            <person name="Ketchum K.A."/>
            <person name="Kimmel B.E."/>
            <person name="Kodira C.D."/>
            <person name="Kraft C.L."/>
            <person name="Kravitz S."/>
            <person name="Kulp D."/>
            <person name="Lai Z."/>
            <person name="Lasko P."/>
            <person name="Lei Y."/>
            <person name="Levitsky A.A."/>
            <person name="Li J.H."/>
            <person name="Li Z."/>
            <person name="Liang Y."/>
            <person name="Lin X."/>
            <person name="Liu X."/>
            <person name="Mattei B."/>
            <person name="McIntosh T.C."/>
            <person name="McLeod M.P."/>
            <person name="McPherson D."/>
            <person name="Merkulov G."/>
            <person name="Milshina N.V."/>
            <person name="Mobarry C."/>
            <person name="Morris J."/>
            <person name="Moshrefi A."/>
            <person name="Mount S.M."/>
            <person name="Moy M."/>
            <person name="Murphy B."/>
            <person name="Murphy L."/>
            <person name="Muzny D.M."/>
            <person name="Nelson D.L."/>
            <person name="Nelson D.R."/>
            <person name="Nelson K.A."/>
            <person name="Nixon K."/>
            <person name="Nusskern D.R."/>
            <person name="Pacleb J.M."/>
            <person name="Palazzolo M."/>
            <person name="Pittman G.S."/>
            <person name="Pan S."/>
            <person name="Pollard J."/>
            <person name="Puri V."/>
            <person name="Reese M.G."/>
            <person name="Reinert K."/>
            <person name="Remington K."/>
            <person name="Saunders R.D.C."/>
            <person name="Scheeler F."/>
            <person name="Shen H."/>
            <person name="Shue B.C."/>
            <person name="Siden-Kiamos I."/>
            <person name="Simpson M."/>
            <person name="Skupski M.P."/>
            <person name="Smith T.J."/>
            <person name="Spier E."/>
            <person name="Spradling A.C."/>
            <person name="Stapleton M."/>
            <person name="Strong R."/>
            <person name="Sun E."/>
            <person name="Svirskas R."/>
            <person name="Tector C."/>
            <person name="Turner R."/>
            <person name="Venter E."/>
            <person name="Wang A.H."/>
            <person name="Wang X."/>
            <person name="Wang Z.-Y."/>
            <person name="Wassarman D.A."/>
            <person name="Weinstock G.M."/>
            <person name="Weissenbach J."/>
            <person name="Williams S.M."/>
            <person name="Woodage T."/>
            <person name="Worley K.C."/>
            <person name="Wu D."/>
            <person name="Yang S."/>
            <person name="Yao Q.A."/>
            <person name="Ye J."/>
            <person name="Yeh R.-F."/>
            <person name="Zaveri J.S."/>
            <person name="Zhan M."/>
            <person name="Zhang G."/>
            <person name="Zhao Q."/>
            <person name="Zheng L."/>
            <person name="Zheng X.H."/>
            <person name="Zhong F.N."/>
            <person name="Zhong W."/>
            <person name="Zhou X."/>
            <person name="Zhu S.C."/>
            <person name="Zhu X."/>
            <person name="Smith H.O."/>
            <person name="Gibbs R.A."/>
            <person name="Myers E.W."/>
            <person name="Rubin G.M."/>
            <person name="Venter J.C."/>
        </authorList>
    </citation>
    <scope>NUCLEOTIDE SEQUENCE [LARGE SCALE GENOMIC DNA]</scope>
    <source>
        <strain>Berkeley</strain>
    </source>
</reference>
<reference key="3">
    <citation type="journal article" date="2002" name="Genome Biol.">
        <title>Annotation of the Drosophila melanogaster euchromatic genome: a systematic review.</title>
        <authorList>
            <person name="Misra S."/>
            <person name="Crosby M.A."/>
            <person name="Mungall C.J."/>
            <person name="Matthews B.B."/>
            <person name="Campbell K.S."/>
            <person name="Hradecky P."/>
            <person name="Huang Y."/>
            <person name="Kaminker J.S."/>
            <person name="Millburn G.H."/>
            <person name="Prochnik S.E."/>
            <person name="Smith C.D."/>
            <person name="Tupy J.L."/>
            <person name="Whitfield E.J."/>
            <person name="Bayraktaroglu L."/>
            <person name="Berman B.P."/>
            <person name="Bettencourt B.R."/>
            <person name="Celniker S.E."/>
            <person name="de Grey A.D.N.J."/>
            <person name="Drysdale R.A."/>
            <person name="Harris N.L."/>
            <person name="Richter J."/>
            <person name="Russo S."/>
            <person name="Schroeder A.J."/>
            <person name="Shu S.Q."/>
            <person name="Stapleton M."/>
            <person name="Yamada C."/>
            <person name="Ashburner M."/>
            <person name="Gelbart W.M."/>
            <person name="Rubin G.M."/>
            <person name="Lewis S.E."/>
        </authorList>
    </citation>
    <scope>GENOME REANNOTATION</scope>
    <source>
        <strain>Berkeley</strain>
    </source>
</reference>
<reference key="4">
    <citation type="journal article" date="2002" name="Genome Biol.">
        <title>A Drosophila full-length cDNA resource.</title>
        <authorList>
            <person name="Stapleton M."/>
            <person name="Carlson J.W."/>
            <person name="Brokstein P."/>
            <person name="Yu C."/>
            <person name="Champe M."/>
            <person name="George R.A."/>
            <person name="Guarin H."/>
            <person name="Kronmiller B."/>
            <person name="Pacleb J.M."/>
            <person name="Park S."/>
            <person name="Wan K.H."/>
            <person name="Rubin G.M."/>
            <person name="Celniker S.E."/>
        </authorList>
    </citation>
    <scope>NUCLEOTIDE SEQUENCE [LARGE SCALE MRNA]</scope>
    <source>
        <strain>Berkeley</strain>
        <tissue>Embryo</tissue>
    </source>
</reference>
<reference key="5">
    <citation type="journal article" date="1992" name="Development">
        <title>The big brain gene of Drosophila functions to control the number of neuronal precursors in the peripheral nervous system.</title>
        <authorList>
            <person name="Rao Y."/>
            <person name="Bodmer R."/>
            <person name="Jan L.Y."/>
            <person name="Jan Y.N."/>
        </authorList>
    </citation>
    <scope>FUNCTION</scope>
</reference>
<reference key="6">
    <citation type="journal article" date="1997" name="Development">
        <title>The Drosophila neurogenic gene big brain, which encodes a membrane-associated protein, acts cell autonomously and can act synergistically with Notch and Delta.</title>
        <authorList>
            <person name="Doherty D."/>
            <person name="Jan L.Y."/>
            <person name="Jan Y.N."/>
        </authorList>
    </citation>
    <scope>FUNCTION</scope>
    <scope>SUBCELLULAR LOCATION</scope>
    <scope>TISSUE SPECIFICITY</scope>
    <scope>DEVELOPMENTAL STAGE</scope>
</reference>
<reference key="7">
    <citation type="journal article" date="2002" name="J. Neurosci.">
        <title>Regulated cationic channel function in Xenopus oocytes expressing Drosophila big brain.</title>
        <authorList>
            <person name="Yanochko G.M."/>
            <person name="Yool A.J."/>
        </authorList>
    </citation>
    <scope>FUNCTION</scope>
    <scope>PHOSPHORYLATION</scope>
    <scope>MUTAGENESIS OF GLU-71</scope>
</reference>
<reference key="8">
    <citation type="journal article" date="2004" name="Biophys. J.">
        <title>Block by extracellular divalent cations of Drosophila big brain channels expressed in Xenopus oocytes.</title>
        <authorList>
            <person name="Yanochko G.M."/>
            <person name="Yool A.J."/>
        </authorList>
    </citation>
    <scope>FUNCTION</scope>
    <scope>MUTAGENESIS OF GLU-71; ASP-253 AND GLU-274</scope>
</reference>
<reference key="9">
    <citation type="journal article" date="2008" name="J. Proteome Res.">
        <title>Phosphoproteome analysis of Drosophila melanogaster embryos.</title>
        <authorList>
            <person name="Zhai B."/>
            <person name="Villen J."/>
            <person name="Beausoleil S.A."/>
            <person name="Mintseris J."/>
            <person name="Gygi S.P."/>
        </authorList>
    </citation>
    <scope>PHOSPHORYLATION [LARGE SCALE ANALYSIS] AT SER-46; THR-47; SER-300; SER-394 AND SER-576</scope>
    <scope>IDENTIFICATION BY MASS SPECTROMETRY</scope>
    <source>
        <tissue>Embryo</tissue>
    </source>
</reference>
<sequence>MADESLHTVPLEHNIDYHIVTLFERLEAMRKDSHGGGHGVNNRLSSTLQAPKRSMQAEIRTLEFWRSIISECLASFMYVFIVCGAAAGVGVGASVSSVLLATALASGLAMATLTQCFLHISGAHINPAVTLALCVVRSISPIRAAMYITAQCGGGIAGAALLYGVTVPGYQGNLQAAISHSAALAAWERFGVEFILTFLVVLCYFVSTDPMKKFMGNSAASIGCAYSACCFVSMPYLNPARSLGPSFVLNKWDSHWVYWFGPLVGGMASGLVYEYIFNSRNRNLRHNKGSIDNDSSSIHSEDELNYDMDMEKPNKYQQSQGTYPRGQSNGNGGGQAAGNGQHQAANMGQMPGVVANAGQGNYCQNLYTAPPLSSKYDQQQEPLYGGTRSLYCRSPTLTRSNLNRSQSVYAKSNTAINRDIVPRPGPLVPAQSLYPMRTQQQQQQQQQQQQQVAPAPQSSHLQNQNVQNQMQQRSESIYGMRGSMRGQQQPIQQQQQQQQQQQLQQQQPNMGVQQQQMQPPPQMMSDPQQQPQGFQPVYGTRTNPTPMDGNHKYDRRDPQQMYGVTGPRNRGQSAQSDDSSYGSYHGSAVTPPARHPSVEPSPPPPPMLMYAPPPQPNAAHPQPIRTQSERKVSAPVVVSQPAACAVTYTTSQGSAVTAQQQQQQQQQQQQQQQQQQQQMMMQQQQQHYGMLPLRPN</sequence>
<feature type="chain" id="PRO_0000064097" description="Neurogenic protein big brain">
    <location>
        <begin position="1"/>
        <end position="696"/>
    </location>
</feature>
<feature type="topological domain" description="Cytoplasmic" evidence="1">
    <location>
        <begin position="1"/>
        <end position="71"/>
    </location>
</feature>
<feature type="transmembrane region" description="Helical" evidence="1">
    <location>
        <begin position="72"/>
        <end position="93"/>
    </location>
</feature>
<feature type="topological domain" description="Extracellular" evidence="1">
    <location>
        <begin position="94"/>
        <end position="97"/>
    </location>
</feature>
<feature type="transmembrane region" description="Helical" evidence="1">
    <location>
        <begin position="98"/>
        <end position="118"/>
    </location>
</feature>
<feature type="topological domain" description="Cytoplasmic" evidence="1">
    <location>
        <begin position="119"/>
        <end position="143"/>
    </location>
</feature>
<feature type="transmembrane region" description="Helical" evidence="1">
    <location>
        <begin position="144"/>
        <end position="167"/>
    </location>
</feature>
<feature type="topological domain" description="Extracellular" evidence="1">
    <location>
        <begin position="168"/>
        <end position="189"/>
    </location>
</feature>
<feature type="transmembrane region" description="Helical" evidence="1">
    <location>
        <begin position="190"/>
        <end position="208"/>
    </location>
</feature>
<feature type="topological domain" description="Cytoplasmic" evidence="1">
    <location>
        <begin position="209"/>
        <end position="213"/>
    </location>
</feature>
<feature type="transmembrane region" description="Helical" evidence="1">
    <location>
        <begin position="214"/>
        <end position="234"/>
    </location>
</feature>
<feature type="topological domain" description="Extracellular" evidence="1">
    <location>
        <begin position="235"/>
        <end position="256"/>
    </location>
</feature>
<feature type="transmembrane region" description="Helical" evidence="1">
    <location>
        <begin position="257"/>
        <end position="273"/>
    </location>
</feature>
<feature type="topological domain" description="Cytoplasmic" evidence="1">
    <location>
        <begin position="274"/>
        <end position="696"/>
    </location>
</feature>
<feature type="region of interest" description="Disordered" evidence="2">
    <location>
        <begin position="314"/>
        <end position="345"/>
    </location>
</feature>
<feature type="region of interest" description="Disordered" evidence="2">
    <location>
        <begin position="436"/>
        <end position="634"/>
    </location>
</feature>
<feature type="region of interest" description="Disordered" evidence="2">
    <location>
        <begin position="650"/>
        <end position="696"/>
    </location>
</feature>
<feature type="short sequence motif" description="NPA 1">
    <location>
        <begin position="126"/>
        <end position="128"/>
    </location>
</feature>
<feature type="short sequence motif" description="NPA 2">
    <location>
        <begin position="238"/>
        <end position="240"/>
    </location>
</feature>
<feature type="compositionally biased region" description="Low complexity" evidence="2">
    <location>
        <begin position="439"/>
        <end position="451"/>
    </location>
</feature>
<feature type="compositionally biased region" description="Low complexity" evidence="2">
    <location>
        <begin position="462"/>
        <end position="472"/>
    </location>
</feature>
<feature type="compositionally biased region" description="Low complexity" evidence="2">
    <location>
        <begin position="487"/>
        <end position="532"/>
    </location>
</feature>
<feature type="compositionally biased region" description="Basic and acidic residues" evidence="2">
    <location>
        <begin position="549"/>
        <end position="558"/>
    </location>
</feature>
<feature type="compositionally biased region" description="Low complexity" evidence="2">
    <location>
        <begin position="576"/>
        <end position="587"/>
    </location>
</feature>
<feature type="compositionally biased region" description="Pro residues" evidence="2">
    <location>
        <begin position="599"/>
        <end position="616"/>
    </location>
</feature>
<feature type="compositionally biased region" description="Low complexity" evidence="2">
    <location>
        <begin position="659"/>
        <end position="686"/>
    </location>
</feature>
<feature type="modified residue" description="Phosphoserine" evidence="7">
    <location>
        <position position="46"/>
    </location>
</feature>
<feature type="modified residue" description="Phosphothreonine" evidence="7">
    <location>
        <position position="47"/>
    </location>
</feature>
<feature type="modified residue" description="Phosphotyrosine; by Src" evidence="1">
    <location>
        <position position="273"/>
    </location>
</feature>
<feature type="modified residue" description="Phosphoserine" evidence="7">
    <location>
        <position position="300"/>
    </location>
</feature>
<feature type="modified residue" description="Phosphotyrosine; by Abl" evidence="1">
    <location>
        <position position="367"/>
    </location>
</feature>
<feature type="modified residue" description="Phosphotyrosine; by Src" evidence="1">
    <location>
        <position position="384"/>
    </location>
</feature>
<feature type="modified residue" description="Phosphoserine" evidence="7">
    <location>
        <position position="394"/>
    </location>
</feature>
<feature type="modified residue" description="Phosphotyrosine; by Src" evidence="1">
    <location>
        <position position="478"/>
    </location>
</feature>
<feature type="modified residue" description="Phosphoserine" evidence="7">
    <location>
        <position position="576"/>
    </location>
</feature>
<feature type="modified residue" description="Phosphotyrosine; by Abl" evidence="1">
    <location>
        <position position="610"/>
    </location>
</feature>
<feature type="mutagenesis site" description="Partial loss of transport activity and increased sensitivity to blocking by the magnesium ion." evidence="3 5">
    <original>E</original>
    <variation>D</variation>
    <location>
        <position position="71"/>
    </location>
</feature>
<feature type="mutagenesis site" description="Loss of expression in cell membrane." evidence="3 5">
    <original>E</original>
    <variation>K</variation>
    <location>
        <position position="71"/>
    </location>
</feature>
<feature type="mutagenesis site" description="Loss of transport activity." evidence="3 5">
    <original>E</original>
    <variation>N</variation>
    <location>
        <position position="71"/>
    </location>
</feature>
<feature type="mutagenesis site" description="Loss of transport activity." evidence="3 5">
    <original>E</original>
    <variation>Q</variation>
    <location>
        <position position="71"/>
    </location>
</feature>
<feature type="mutagenesis site" description="No effect on transport activity." evidence="5">
    <original>D</original>
    <variation>N</variation>
    <location>
        <position position="253"/>
    </location>
</feature>
<feature type="mutagenesis site" description="No effect on transport activity." evidence="5">
    <original>E</original>
    <variation>Q</variation>
    <location>
        <position position="274"/>
    </location>
</feature>
<feature type="sequence conflict" description="In Ref. 1; CAB37863." evidence="9" ref="1">
    <original>F</original>
    <variation>S</variation>
    <location>
        <position position="198"/>
    </location>
</feature>
<feature type="sequence conflict" description="In Ref. 1; CAB37863." evidence="9" ref="1">
    <original>P</original>
    <variation>S</variation>
    <location>
        <position position="454"/>
    </location>
</feature>
<feature type="sequence conflict" description="In Ref. 1; CAB37863." evidence="9" ref="1">
    <location>
        <position position="492"/>
    </location>
</feature>
<feature type="sequence conflict" description="In Ref. 1." evidence="9" ref="1">
    <original>Q</original>
    <variation>QQQQQQ</variation>
    <location>
        <position position="678"/>
    </location>
</feature>
<protein>
    <recommendedName>
        <fullName>Neurogenic protein big brain</fullName>
    </recommendedName>
</protein>
<gene>
    <name type="primary">bib</name>
    <name type="ORF">CG4722</name>
</gene>
<keyword id="KW-0217">Developmental protein</keyword>
<keyword id="KW-0221">Differentiation</keyword>
<keyword id="KW-0407">Ion channel</keyword>
<keyword id="KW-0406">Ion transport</keyword>
<keyword id="KW-0472">Membrane</keyword>
<keyword id="KW-0524">Neurogenesis</keyword>
<keyword id="KW-0597">Phosphoprotein</keyword>
<keyword id="KW-1185">Reference proteome</keyword>
<keyword id="KW-0677">Repeat</keyword>
<keyword id="KW-0812">Transmembrane</keyword>
<keyword id="KW-1133">Transmembrane helix</keyword>
<keyword id="KW-0813">Transport</keyword>